<gene>
    <name evidence="2" type="primary">kay</name>
    <name type="ORF">GI10426</name>
</gene>
<reference evidence="6" key="1">
    <citation type="journal article" date="2007" name="Nature">
        <title>Evolution of genes and genomes on the Drosophila phylogeny.</title>
        <authorList>
            <consortium name="Drosophila 12 genomes consortium"/>
        </authorList>
    </citation>
    <scope>NUCLEOTIDE SEQUENCE [LARGE SCALE GENOMIC DNA]</scope>
    <source>
        <strain evidence="6">Tucson 15081-1352.22</strain>
    </source>
</reference>
<sequence length="784" mass="85158">MMKNLNGRAHNVCYQPYYQQQLQHQQLHQQQHQQQQQQQQQQQHLQQQQLQLQLPYAAQYNQLQQQQLQYNQQQYYQQQLQQQQQQQQQQQLLRQQQPTQSAYQQQNAKQSYGHNNNNNSNNNANMARSNMHATTVAAVNANGNSHANAANANTATAAMAAMCQMQSFLSQQQQQQRQQQQQQQQQYSNNSAHINYNQQQQQSQQQQQSQQQQQSQQQQQSQQQQQQHLPTVATTNGDKLTLDSANEIANFLANELFMQQLVTFDGMQSAPTLTTPTLTPTTLRTIEDTIYELTTDSHVPFQAGFKPPPLTSLGNITNNNTITSTTAGGATLPGINANLINTNPQFDLIALNCAGSVPGSDTEESNGSWNEGQLNDDQSTTDTSSAATDSTSYQNGGHMMGNGSNGGVNNFAAALSGVNTSGRGSGLAANSTTSNSATPARRGGGRRPNKAANMSPEEEEKRRIRRERNKLAAARCRKRRVDQTNELTEEVDALMKKSEDLKKEIESLTATKSQLEYVLQTHSSTCQKVRDDLLTVATCNGLIGPTTLLNACNTSSVSLHNSNNSNNNSNSNDSSNGTITGFDATLNSTGRSNSPLDLKPVLIDEQLLQHIKHEPQDGAIDSGSSLDQDGPTPAKRFALPNIATFNASLQTPTGPAAGAALNTPISSTAPSSFAHFSSAISSPTLNAHALNKLPKPRPNTLNVNAQRPFGVAAAAGDGKAPPTQIQGVPIQTPSTGTFNFDSLMDGGTGLTPVSGPLMPTCSSQNKHPLELPTPTSEPSKLVSL</sequence>
<accession>B4K617</accession>
<organism>
    <name type="scientific">Drosophila mojavensis</name>
    <name type="common">Fruit fly</name>
    <dbReference type="NCBI Taxonomy" id="7230"/>
    <lineage>
        <taxon>Eukaryota</taxon>
        <taxon>Metazoa</taxon>
        <taxon>Ecdysozoa</taxon>
        <taxon>Arthropoda</taxon>
        <taxon>Hexapoda</taxon>
        <taxon>Insecta</taxon>
        <taxon>Pterygota</taxon>
        <taxon>Neoptera</taxon>
        <taxon>Endopterygota</taxon>
        <taxon>Diptera</taxon>
        <taxon>Brachycera</taxon>
        <taxon>Muscomorpha</taxon>
        <taxon>Ephydroidea</taxon>
        <taxon>Drosophilidae</taxon>
        <taxon>Drosophila</taxon>
    </lineage>
</organism>
<dbReference type="EMBL" id="CH933806">
    <property type="protein sequence ID" value="EDW16254.1"/>
    <property type="molecule type" value="Genomic_DNA"/>
</dbReference>
<dbReference type="SMR" id="B4K617"/>
<dbReference type="FunCoup" id="B4K617">
    <property type="interactions" value="452"/>
</dbReference>
<dbReference type="EnsemblMetazoa" id="FBtr0428490">
    <property type="protein sequence ID" value="FBpp0386028"/>
    <property type="gene ID" value="FBgn0133190"/>
</dbReference>
<dbReference type="EnsemblMetazoa" id="XM_032731742.2">
    <property type="protein sequence ID" value="XP_032587633.1"/>
    <property type="gene ID" value="LOC6574764"/>
</dbReference>
<dbReference type="GeneID" id="6574764"/>
<dbReference type="CTD" id="3772082"/>
<dbReference type="eggNOG" id="KOG1414">
    <property type="taxonomic scope" value="Eukaryota"/>
</dbReference>
<dbReference type="HOGENOM" id="CLU_020183_0_0_1"/>
<dbReference type="InParanoid" id="B4K617"/>
<dbReference type="OMA" id="HQSLHFA"/>
<dbReference type="OrthoDB" id="5866312at2759"/>
<dbReference type="PhylomeDB" id="B4K617"/>
<dbReference type="ChiTaRS" id="kay">
    <property type="organism name" value="fly"/>
</dbReference>
<dbReference type="Proteomes" id="UP000009192">
    <property type="component" value="Unassembled WGS sequence"/>
</dbReference>
<dbReference type="GO" id="GO:0005634">
    <property type="term" value="C:nucleus"/>
    <property type="evidence" value="ECO:0000250"/>
    <property type="project" value="UniProtKB"/>
</dbReference>
<dbReference type="GO" id="GO:0003677">
    <property type="term" value="F:DNA binding"/>
    <property type="evidence" value="ECO:0000250"/>
    <property type="project" value="UniProtKB"/>
</dbReference>
<dbReference type="GO" id="GO:0000981">
    <property type="term" value="F:DNA-binding transcription factor activity, RNA polymerase II-specific"/>
    <property type="evidence" value="ECO:0007669"/>
    <property type="project" value="TreeGrafter"/>
</dbReference>
<dbReference type="GO" id="GO:0000978">
    <property type="term" value="F:RNA polymerase II cis-regulatory region sequence-specific DNA binding"/>
    <property type="evidence" value="ECO:0007669"/>
    <property type="project" value="TreeGrafter"/>
</dbReference>
<dbReference type="GO" id="GO:0009792">
    <property type="term" value="P:embryo development ending in birth or egg hatching"/>
    <property type="evidence" value="ECO:0000250"/>
    <property type="project" value="UniProtKB"/>
</dbReference>
<dbReference type="CDD" id="cd14721">
    <property type="entry name" value="bZIP_Fos"/>
    <property type="match status" value="1"/>
</dbReference>
<dbReference type="FunFam" id="1.20.5.170:FF:000006">
    <property type="entry name" value="fos-related antigen 2 isoform X1"/>
    <property type="match status" value="1"/>
</dbReference>
<dbReference type="Gene3D" id="1.20.5.170">
    <property type="match status" value="1"/>
</dbReference>
<dbReference type="InterPro" id="IPR000837">
    <property type="entry name" value="AP-1"/>
</dbReference>
<dbReference type="InterPro" id="IPR004827">
    <property type="entry name" value="bZIP"/>
</dbReference>
<dbReference type="InterPro" id="IPR046347">
    <property type="entry name" value="bZIP_sf"/>
</dbReference>
<dbReference type="PANTHER" id="PTHR23351:SF24">
    <property type="entry name" value="ACTIVATING TRANSCRIPTION FACTOR 3-RELATED"/>
    <property type="match status" value="1"/>
</dbReference>
<dbReference type="PANTHER" id="PTHR23351">
    <property type="entry name" value="FOS TRANSCRIPTION FACTOR-RELATED"/>
    <property type="match status" value="1"/>
</dbReference>
<dbReference type="Pfam" id="PF00170">
    <property type="entry name" value="bZIP_1"/>
    <property type="match status" value="1"/>
</dbReference>
<dbReference type="PRINTS" id="PR00042">
    <property type="entry name" value="LEUZIPPRFOS"/>
</dbReference>
<dbReference type="SMART" id="SM00338">
    <property type="entry name" value="BRLZ"/>
    <property type="match status" value="1"/>
</dbReference>
<dbReference type="SUPFAM" id="SSF57959">
    <property type="entry name" value="Leucine zipper domain"/>
    <property type="match status" value="1"/>
</dbReference>
<dbReference type="PROSITE" id="PS50217">
    <property type="entry name" value="BZIP"/>
    <property type="match status" value="1"/>
</dbReference>
<dbReference type="PROSITE" id="PS00036">
    <property type="entry name" value="BZIP_BASIC"/>
    <property type="match status" value="1"/>
</dbReference>
<feature type="chain" id="PRO_0000377386" description="Transcription factor kayak">
    <location>
        <begin position="1"/>
        <end position="784"/>
    </location>
</feature>
<feature type="domain" description="bZIP" evidence="4">
    <location>
        <begin position="459"/>
        <end position="522"/>
    </location>
</feature>
<feature type="region of interest" description="Disordered" evidence="5">
    <location>
        <begin position="97"/>
        <end position="126"/>
    </location>
</feature>
<feature type="region of interest" description="Disordered" evidence="5">
    <location>
        <begin position="196"/>
        <end position="231"/>
    </location>
</feature>
<feature type="region of interest" description="Disordered" evidence="5">
    <location>
        <begin position="358"/>
        <end position="404"/>
    </location>
</feature>
<feature type="region of interest" description="Disordered" evidence="5">
    <location>
        <begin position="421"/>
        <end position="464"/>
    </location>
</feature>
<feature type="region of interest" description="Basic motif" evidence="4">
    <location>
        <begin position="461"/>
        <end position="463"/>
    </location>
</feature>
<feature type="region of interest" description="Leucine-zipper" evidence="4">
    <location>
        <begin position="464"/>
        <end position="471"/>
    </location>
</feature>
<feature type="region of interest" description="Disordered" evidence="5">
    <location>
        <begin position="616"/>
        <end position="635"/>
    </location>
</feature>
<feature type="region of interest" description="Disordered" evidence="5">
    <location>
        <begin position="759"/>
        <end position="784"/>
    </location>
</feature>
<feature type="compositionally biased region" description="Low complexity" evidence="5">
    <location>
        <begin position="97"/>
        <end position="106"/>
    </location>
</feature>
<feature type="compositionally biased region" description="Low complexity" evidence="5">
    <location>
        <begin position="115"/>
        <end position="126"/>
    </location>
</feature>
<feature type="compositionally biased region" description="Low complexity" evidence="5">
    <location>
        <begin position="198"/>
        <end position="227"/>
    </location>
</feature>
<feature type="compositionally biased region" description="Polar residues" evidence="5">
    <location>
        <begin position="365"/>
        <end position="378"/>
    </location>
</feature>
<feature type="compositionally biased region" description="Low complexity" evidence="5">
    <location>
        <begin position="380"/>
        <end position="397"/>
    </location>
</feature>
<feature type="compositionally biased region" description="Polar residues" evidence="5">
    <location>
        <begin position="421"/>
        <end position="438"/>
    </location>
</feature>
<feature type="modified residue" description="Phosphoserine" evidence="2">
    <location>
        <position position="594"/>
    </location>
</feature>
<evidence type="ECO:0000250" key="1"/>
<evidence type="ECO:0000250" key="2">
    <source>
        <dbReference type="UniProtKB" id="P21525"/>
    </source>
</evidence>
<evidence type="ECO:0000255" key="3"/>
<evidence type="ECO:0000255" key="4">
    <source>
        <dbReference type="PROSITE-ProRule" id="PRU00978"/>
    </source>
</evidence>
<evidence type="ECO:0000256" key="5">
    <source>
        <dbReference type="SAM" id="MobiDB-lite"/>
    </source>
</evidence>
<evidence type="ECO:0000312" key="6">
    <source>
        <dbReference type="EMBL" id="EDW16254.1"/>
    </source>
</evidence>
<protein>
    <recommendedName>
        <fullName evidence="2">Transcription factor kayak</fullName>
    </recommendedName>
</protein>
<proteinExistence type="inferred from homology"/>
<name>FOSL_DROMO</name>
<keyword id="KW-0010">Activator</keyword>
<keyword id="KW-0238">DNA-binding</keyword>
<keyword id="KW-0539">Nucleus</keyword>
<keyword id="KW-0597">Phosphoprotein</keyword>
<keyword id="KW-1185">Reference proteome</keyword>
<keyword id="KW-0804">Transcription</keyword>
<keyword id="KW-0805">Transcription regulation</keyword>
<comment type="function">
    <text evidence="2">Developmentally regulated transcription factor AP-1 binds and recognizes the enhancer DNA sequence: 5'-TGA[CG]TCA-3'. May play a role in the function or determination of a particular subset of cells in the developing embryo. It is able to carry out its function either independently of or in conjunction with Jra (By similarity).</text>
</comment>
<comment type="subunit">
    <text evidence="1">Homodimer. Heterodimer with Jra. The kay-Jra heterodimer binds more stably to the AP-1 site than either of the two proteins alone (By similarity).</text>
</comment>
<comment type="subcellular location">
    <subcellularLocation>
        <location evidence="2 4">Nucleus</location>
    </subcellularLocation>
</comment>
<comment type="similarity">
    <text evidence="3">Belongs to the bZIP family. Fos subfamily.</text>
</comment>